<sequence>MDFLLFLFCLNLFIHLFDKYVKTFLVNQGFRVYARFSGSPEFKSYNDLRLQLLSTKRDLNNVSAQDEFAKWARLNRKFDQLNVKWEKQSKIVSQKSEGVKKLISLTFWIVTRGYRFIVQFKNSGNPVFAVPEGMLPTWALWFLALPKAKTGYVSVAVWNFASQKVISTLL</sequence>
<feature type="chain" id="PRO_0000388617" description="Protein get1">
    <location>
        <begin position="1"/>
        <end position="170"/>
    </location>
</feature>
<feature type="topological domain" description="Lumenal" evidence="1">
    <location>
        <begin position="1"/>
        <end position="3"/>
    </location>
</feature>
<feature type="transmembrane region" description="Helical" evidence="1">
    <location>
        <begin position="4"/>
        <end position="23"/>
    </location>
</feature>
<feature type="topological domain" description="Cytoplasmic" evidence="1">
    <location>
        <begin position="24"/>
        <end position="107"/>
    </location>
</feature>
<feature type="transmembrane region" description="Helical" evidence="1">
    <location>
        <begin position="108"/>
        <end position="128"/>
    </location>
</feature>
<feature type="topological domain" description="Lumenal" evidence="1">
    <location>
        <begin position="129"/>
        <end position="152"/>
    </location>
</feature>
<feature type="transmembrane region" description="Helical" evidence="1">
    <location>
        <begin position="153"/>
        <end position="169"/>
    </location>
</feature>
<feature type="topological domain" description="Cytoplasmic" evidence="1">
    <location>
        <position position="170"/>
    </location>
</feature>
<comment type="function">
    <text evidence="1">Required for the post-translational delivery of tail-anchored (TA) proteins to the endoplasmic reticulum. Acts as a membrane receptor for soluble get3, which recognizes and selectively binds the transmembrane domain of TA proteins in the cytosol.</text>
</comment>
<comment type="subunit">
    <text evidence="1">Interacts with get3.</text>
</comment>
<comment type="subcellular location">
    <subcellularLocation>
        <location evidence="1">Endoplasmic reticulum membrane</location>
        <topology evidence="1">Multi-pass membrane protein</topology>
    </subcellularLocation>
</comment>
<comment type="similarity">
    <text evidence="1">Belongs to the WRB/GET1 family.</text>
</comment>
<evidence type="ECO:0000255" key="1">
    <source>
        <dbReference type="HAMAP-Rule" id="MF_03113"/>
    </source>
</evidence>
<name>GET1_SCHJY</name>
<organism>
    <name type="scientific">Schizosaccharomyces japonicus (strain yFS275 / FY16936)</name>
    <name type="common">Fission yeast</name>
    <dbReference type="NCBI Taxonomy" id="402676"/>
    <lineage>
        <taxon>Eukaryota</taxon>
        <taxon>Fungi</taxon>
        <taxon>Dikarya</taxon>
        <taxon>Ascomycota</taxon>
        <taxon>Taphrinomycotina</taxon>
        <taxon>Schizosaccharomycetes</taxon>
        <taxon>Schizosaccharomycetales</taxon>
        <taxon>Schizosaccharomycetaceae</taxon>
        <taxon>Schizosaccharomyces</taxon>
    </lineage>
</organism>
<dbReference type="EMBL" id="KE651168">
    <property type="protein sequence ID" value="EEB06139.1"/>
    <property type="molecule type" value="Genomic_DNA"/>
</dbReference>
<dbReference type="RefSeq" id="XP_002172432.1">
    <property type="nucleotide sequence ID" value="XM_002172396.2"/>
</dbReference>
<dbReference type="SMR" id="B6JZY9"/>
<dbReference type="STRING" id="402676.B6JZY9"/>
<dbReference type="EnsemblFungi" id="EEB06139">
    <property type="protein sequence ID" value="EEB06139"/>
    <property type="gene ID" value="SJAG_01178"/>
</dbReference>
<dbReference type="GeneID" id="7047436"/>
<dbReference type="JaponicusDB" id="SJAG_01178">
    <property type="gene designation" value="get1"/>
</dbReference>
<dbReference type="VEuPathDB" id="FungiDB:SJAG_01178"/>
<dbReference type="eggNOG" id="KOG4253">
    <property type="taxonomic scope" value="Eukaryota"/>
</dbReference>
<dbReference type="HOGENOM" id="CLU_089418_1_0_1"/>
<dbReference type="OMA" id="AEWIISF"/>
<dbReference type="OrthoDB" id="69461at2759"/>
<dbReference type="Proteomes" id="UP000001744">
    <property type="component" value="Unassembled WGS sequence"/>
</dbReference>
<dbReference type="GO" id="GO:0005789">
    <property type="term" value="C:endoplasmic reticulum membrane"/>
    <property type="evidence" value="ECO:0007669"/>
    <property type="project" value="UniProtKB-SubCell"/>
</dbReference>
<dbReference type="GO" id="GO:0043529">
    <property type="term" value="C:GET complex"/>
    <property type="evidence" value="ECO:0000318"/>
    <property type="project" value="GO_Central"/>
</dbReference>
<dbReference type="GO" id="GO:0043495">
    <property type="term" value="F:protein-membrane adaptor activity"/>
    <property type="evidence" value="ECO:0000318"/>
    <property type="project" value="GO_Central"/>
</dbReference>
<dbReference type="GO" id="GO:0071816">
    <property type="term" value="P:tail-anchored membrane protein insertion into ER membrane"/>
    <property type="evidence" value="ECO:0000318"/>
    <property type="project" value="GO_Central"/>
</dbReference>
<dbReference type="Gene3D" id="1.10.287.660">
    <property type="entry name" value="Helix hairpin bin"/>
    <property type="match status" value="1"/>
</dbReference>
<dbReference type="HAMAP" id="MF_03113">
    <property type="entry name" value="Get1"/>
    <property type="match status" value="1"/>
</dbReference>
<dbReference type="InterPro" id="IPR028945">
    <property type="entry name" value="Get1"/>
</dbReference>
<dbReference type="InterPro" id="IPR027538">
    <property type="entry name" value="Get1_fungi"/>
</dbReference>
<dbReference type="InterPro" id="IPR029012">
    <property type="entry name" value="Helix_hairpin_bin_sf"/>
</dbReference>
<dbReference type="PANTHER" id="PTHR42650:SF1">
    <property type="entry name" value="GUIDED ENTRY OF TAIL-ANCHORED PROTEINS FACTOR 1"/>
    <property type="match status" value="1"/>
</dbReference>
<dbReference type="PANTHER" id="PTHR42650">
    <property type="entry name" value="TAIL-ANCHORED PROTEIN INSERTION RECEPTOR WRB"/>
    <property type="match status" value="1"/>
</dbReference>
<dbReference type="Pfam" id="PF04420">
    <property type="entry name" value="CHD5"/>
    <property type="match status" value="1"/>
</dbReference>
<reference key="1">
    <citation type="journal article" date="2011" name="Science">
        <title>Comparative functional genomics of the fission yeasts.</title>
        <authorList>
            <person name="Rhind N."/>
            <person name="Chen Z."/>
            <person name="Yassour M."/>
            <person name="Thompson D.A."/>
            <person name="Haas B.J."/>
            <person name="Habib N."/>
            <person name="Wapinski I."/>
            <person name="Roy S."/>
            <person name="Lin M.F."/>
            <person name="Heiman D.I."/>
            <person name="Young S.K."/>
            <person name="Furuya K."/>
            <person name="Guo Y."/>
            <person name="Pidoux A."/>
            <person name="Chen H.M."/>
            <person name="Robbertse B."/>
            <person name="Goldberg J.M."/>
            <person name="Aoki K."/>
            <person name="Bayne E.H."/>
            <person name="Berlin A.M."/>
            <person name="Desjardins C.A."/>
            <person name="Dobbs E."/>
            <person name="Dukaj L."/>
            <person name="Fan L."/>
            <person name="FitzGerald M.G."/>
            <person name="French C."/>
            <person name="Gujja S."/>
            <person name="Hansen K."/>
            <person name="Keifenheim D."/>
            <person name="Levin J.Z."/>
            <person name="Mosher R.A."/>
            <person name="Mueller C.A."/>
            <person name="Pfiffner J."/>
            <person name="Priest M."/>
            <person name="Russ C."/>
            <person name="Smialowska A."/>
            <person name="Swoboda P."/>
            <person name="Sykes S.M."/>
            <person name="Vaughn M."/>
            <person name="Vengrova S."/>
            <person name="Yoder R."/>
            <person name="Zeng Q."/>
            <person name="Allshire R."/>
            <person name="Baulcombe D."/>
            <person name="Birren B.W."/>
            <person name="Brown W."/>
            <person name="Ekwall K."/>
            <person name="Kellis M."/>
            <person name="Leatherwood J."/>
            <person name="Levin H."/>
            <person name="Margalit H."/>
            <person name="Martienssen R."/>
            <person name="Nieduszynski C.A."/>
            <person name="Spatafora J.W."/>
            <person name="Friedman N."/>
            <person name="Dalgaard J.Z."/>
            <person name="Baumann P."/>
            <person name="Niki H."/>
            <person name="Regev A."/>
            <person name="Nusbaum C."/>
        </authorList>
    </citation>
    <scope>NUCLEOTIDE SEQUENCE [LARGE SCALE GENOMIC DNA]</scope>
    <source>
        <strain>yFS275 / FY16936</strain>
    </source>
</reference>
<gene>
    <name type="primary">get1</name>
    <name type="ORF">SJAG_01178</name>
</gene>
<keyword id="KW-0256">Endoplasmic reticulum</keyword>
<keyword id="KW-0472">Membrane</keyword>
<keyword id="KW-1185">Reference proteome</keyword>
<keyword id="KW-0812">Transmembrane</keyword>
<keyword id="KW-1133">Transmembrane helix</keyword>
<keyword id="KW-0813">Transport</keyword>
<accession>B6JZY9</accession>
<protein>
    <recommendedName>
        <fullName evidence="1">Protein get1</fullName>
    </recommendedName>
    <alternativeName>
        <fullName evidence="1">Guided entry of tail-anchored proteins 1</fullName>
    </alternativeName>
</protein>
<proteinExistence type="inferred from homology"/>